<organism>
    <name type="scientific">Homo sapiens</name>
    <name type="common">Human</name>
    <dbReference type="NCBI Taxonomy" id="9606"/>
    <lineage>
        <taxon>Eukaryota</taxon>
        <taxon>Metazoa</taxon>
        <taxon>Chordata</taxon>
        <taxon>Craniata</taxon>
        <taxon>Vertebrata</taxon>
        <taxon>Euteleostomi</taxon>
        <taxon>Mammalia</taxon>
        <taxon>Eutheria</taxon>
        <taxon>Euarchontoglires</taxon>
        <taxon>Primates</taxon>
        <taxon>Haplorrhini</taxon>
        <taxon>Catarrhini</taxon>
        <taxon>Hominidae</taxon>
        <taxon>Homo</taxon>
    </lineage>
</organism>
<accession>Q9H254</accession>
<accession>E9PGQ5</accession>
<accession>Q9H1K7</accession>
<accession>Q9H1K8</accession>
<accession>Q9H1K9</accession>
<accession>Q9H253</accession>
<accession>Q9H3G8</accession>
<accession>Q9HCD0</accession>
<feature type="chain" id="PRO_0000073465" description="Spectrin beta chain, non-erythrocytic 4">
    <location>
        <begin position="1"/>
        <end position="2564"/>
    </location>
</feature>
<feature type="domain" description="Calponin-homology (CH) 1" evidence="3">
    <location>
        <begin position="61"/>
        <end position="165"/>
    </location>
</feature>
<feature type="domain" description="Calponin-homology (CH) 2" evidence="3">
    <location>
        <begin position="180"/>
        <end position="285"/>
    </location>
</feature>
<feature type="repeat" description="Spectrin 1" evidence="2">
    <location>
        <begin position="311"/>
        <end position="418"/>
    </location>
</feature>
<feature type="repeat" description="Spectrin 2" evidence="2">
    <location>
        <begin position="430"/>
        <end position="533"/>
    </location>
</feature>
<feature type="repeat" description="Spectrin 3" evidence="2">
    <location>
        <begin position="536"/>
        <end position="641"/>
    </location>
</feature>
<feature type="repeat" description="Spectrin 4" evidence="2">
    <location>
        <begin position="774"/>
        <end position="879"/>
    </location>
</feature>
<feature type="repeat" description="Spectrin 5" evidence="2">
    <location>
        <begin position="884"/>
        <end position="982"/>
    </location>
</feature>
<feature type="repeat" description="Spectrin 6" evidence="2">
    <location>
        <begin position="1089"/>
        <end position="1196"/>
    </location>
</feature>
<feature type="repeat" description="Spectrin 7" evidence="2">
    <location>
        <begin position="1306"/>
        <end position="1407"/>
    </location>
</feature>
<feature type="repeat" description="Spectrin 8" evidence="2">
    <location>
        <begin position="1412"/>
        <end position="1512"/>
    </location>
</feature>
<feature type="repeat" description="Spectrin 9" evidence="2">
    <location>
        <begin position="1515"/>
        <end position="1617"/>
    </location>
</feature>
<feature type="repeat" description="Spectrin 10" evidence="2">
    <location>
        <begin position="1623"/>
        <end position="1725"/>
    </location>
</feature>
<feature type="repeat" description="Spectrin 11" evidence="2">
    <location>
        <begin position="1728"/>
        <end position="1830"/>
    </location>
</feature>
<feature type="repeat" description="Spectrin 12" evidence="2">
    <location>
        <begin position="1835"/>
        <end position="1935"/>
    </location>
</feature>
<feature type="repeat" description="Spectrin 13" evidence="2">
    <location>
        <begin position="1944"/>
        <end position="2046"/>
    </location>
</feature>
<feature type="repeat" description="Spectrin 14" evidence="2">
    <location>
        <begin position="2049"/>
        <end position="2123"/>
    </location>
</feature>
<feature type="domain" description="PH" evidence="4">
    <location>
        <begin position="2418"/>
        <end position="2527"/>
    </location>
</feature>
<feature type="region of interest" description="Actin-binding">
    <location>
        <begin position="1"/>
        <end position="282"/>
    </location>
</feature>
<feature type="region of interest" description="Disordered" evidence="5">
    <location>
        <begin position="1"/>
        <end position="37"/>
    </location>
</feature>
<feature type="region of interest" description="Disordered" evidence="5">
    <location>
        <begin position="1853"/>
        <end position="1872"/>
    </location>
</feature>
<feature type="region of interest" description="Disordered" evidence="5">
    <location>
        <begin position="2208"/>
        <end position="2439"/>
    </location>
</feature>
<feature type="region of interest" description="Disordered" evidence="5">
    <location>
        <begin position="2533"/>
        <end position="2564"/>
    </location>
</feature>
<feature type="compositionally biased region" description="Basic and acidic residues" evidence="5">
    <location>
        <begin position="26"/>
        <end position="36"/>
    </location>
</feature>
<feature type="compositionally biased region" description="Low complexity" evidence="5">
    <location>
        <begin position="2208"/>
        <end position="2225"/>
    </location>
</feature>
<feature type="compositionally biased region" description="Basic and acidic residues" evidence="5">
    <location>
        <begin position="2227"/>
        <end position="2254"/>
    </location>
</feature>
<feature type="compositionally biased region" description="Basic and acidic residues" evidence="5">
    <location>
        <begin position="2268"/>
        <end position="2278"/>
    </location>
</feature>
<feature type="compositionally biased region" description="Basic and acidic residues" evidence="5">
    <location>
        <begin position="2287"/>
        <end position="2318"/>
    </location>
</feature>
<feature type="compositionally biased region" description="Pro residues" evidence="5">
    <location>
        <begin position="2343"/>
        <end position="2355"/>
    </location>
</feature>
<feature type="compositionally biased region" description="Basic and acidic residues" evidence="5">
    <location>
        <begin position="2362"/>
        <end position="2377"/>
    </location>
</feature>
<feature type="compositionally biased region" description="Basic and acidic residues" evidence="5">
    <location>
        <begin position="2424"/>
        <end position="2435"/>
    </location>
</feature>
<feature type="compositionally biased region" description="Polar residues" evidence="5">
    <location>
        <begin position="2538"/>
        <end position="2547"/>
    </location>
</feature>
<feature type="compositionally biased region" description="Basic and acidic residues" evidence="5">
    <location>
        <begin position="2548"/>
        <end position="2564"/>
    </location>
</feature>
<feature type="splice variant" id="VSP_046383" description="In isoform 5." evidence="10">
    <location>
        <begin position="1"/>
        <end position="1324"/>
    </location>
</feature>
<feature type="splice variant" id="VSP_000723" description="In isoform 3." evidence="9">
    <location>
        <begin position="1"/>
        <end position="1257"/>
    </location>
</feature>
<feature type="splice variant" id="VSP_000724" description="In isoform 3." evidence="9">
    <original>AVQAAEGLLRQGNIYGEQAQEAVTRLLEK</original>
    <variation>MPHYPSCSSAPSLGTPIPPQIQQLEARHR</variation>
    <location>
        <begin position="1258"/>
        <end position="1286"/>
    </location>
</feature>
<feature type="splice variant" id="VSP_000725" description="In isoform 2." evidence="9">
    <original>NQENQLRAQQWMQKLHDQLELQH</original>
    <variation>CLIIHPALLHPPWEPPYLPRSSS</variation>
    <location>
        <begin position="1287"/>
        <end position="1309"/>
    </location>
</feature>
<feature type="splice variant" id="VSP_000726" description="In isoform 2." evidence="9">
    <location>
        <begin position="1310"/>
        <end position="2564"/>
    </location>
</feature>
<feature type="splice variant" id="VSP_046384" description="In isoform 5." evidence="10">
    <original>DVSSVEVLMNYHQGLKTELEARVPELTTCQ</original>
    <variation>CPSSLLGLPASPWWPTPATPSPLTAPFSME</variation>
    <location>
        <begin position="1973"/>
        <end position="2002"/>
    </location>
</feature>
<feature type="splice variant" id="VSP_046385" description="In isoform 5." evidence="10">
    <location>
        <begin position="2003"/>
        <end position="2564"/>
    </location>
</feature>
<feature type="splice variant" id="VSP_000727" description="In isoform 4." evidence="9">
    <original>IEKIKAEQSKQPPTPLLGRKFFGDPTELAAKAAPLLRPGGYE</original>
    <variation>PRREDHLNPGVQDQPWQHTEKPSLPKPKANKEKTARRDGTCL</variation>
    <location>
        <begin position="2113"/>
        <end position="2154"/>
    </location>
</feature>
<feature type="splice variant" id="VSP_000728" description="In isoform 4." evidence="9">
    <location>
        <begin position="2155"/>
        <end position="2564"/>
    </location>
</feature>
<feature type="sequence variant" id="VAR_079212" description="In NEDHND; decreased protein abundance in patient cells homozygous for the mutation." evidence="8">
    <location>
        <begin position="533"/>
        <end position="2564"/>
    </location>
</feature>
<feature type="sequence variant" id="VAR_048632" description="In dbSNP:rs814501." evidence="7">
    <original>G</original>
    <variation>S</variation>
    <location>
        <position position="1331"/>
    </location>
</feature>
<feature type="sequence conflict" description="In Ref. 2; AAG38874/AAF93171." evidence="11" ref="2">
    <location>
        <begin position="604"/>
        <end position="608"/>
    </location>
</feature>
<feature type="sequence conflict" description="In Ref. 2; AAG38874/AAF93171/AAF93173." evidence="11" ref="2">
    <original>L</original>
    <variation>S</variation>
    <location>
        <position position="714"/>
    </location>
</feature>
<feature type="sequence conflict" description="In Ref. 2; AAG38874/AAF93171/AAF93173." evidence="11" ref="2">
    <original>E</original>
    <variation>K</variation>
    <location>
        <position position="1189"/>
    </location>
</feature>
<feature type="sequence conflict" description="In Ref. 2; AAG38874/AAF93171/AAF93173." evidence="11" ref="2">
    <original>E</original>
    <variation>K</variation>
    <location>
        <position position="1193"/>
    </location>
</feature>
<keyword id="KW-0117">Actin capping</keyword>
<keyword id="KW-0009">Actin-binding</keyword>
<keyword id="KW-0025">Alternative splicing</keyword>
<keyword id="KW-0963">Cytoplasm</keyword>
<keyword id="KW-0206">Cytoskeleton</keyword>
<keyword id="KW-0209">Deafness</keyword>
<keyword id="KW-0225">Disease variant</keyword>
<keyword id="KW-0622">Neuropathy</keyword>
<keyword id="KW-1267">Proteomics identification</keyword>
<keyword id="KW-1185">Reference proteome</keyword>
<keyword id="KW-0677">Repeat</keyword>
<name>SPTN4_HUMAN</name>
<sequence length="2564" mass="288985">MAQVPGEVDNMEGLPAPNNNPAARWESPDRGWEREQPAASTAAASLFECSRIKALADEREAVQKKTFTKWVNSHLARVGCHIGDLYVDLRDGFVLTRLLEVLSGEQLPRPTRGRMRIHSLENVDKALQFLKEQRVHLENVGSHDIVDGNHRLTLGLVWTIILRFQIQVIKIETEDNRETRSAKDALLLWCQMKTAGYPEVNIQNFTTSWRDGLAFNALIHRHRPDLVDFSKLTKSNANYNLQRAFRTAEQHLGLARLLDPEDVNMEAPDEKSIITYVVSFYHYFSKMKALAVEGKRIGKVLDQVLEVGKIIERYEELAAELLAWIHRTVGLISNQKFANSLSGVQQQLQAFTAYCTLEKPVKFQEKGNLEVLLFSIQSKLRACNRRLFVPREGCGIWDIDKAWGELEKAEHEREAALRAELIRQEKLELLAQRFDHKVAMRESWLNENQRLVSQDNFGYELPAVEAAMKKHEAIEADIAAYEERVQGVAELAQALAAEGYYDIRRVAAQRDSVLRQWALLTGLVGARRTRLEQNLALQKVFQEMVYMVDWMEEMQAQLLSRECGQHLVEADDLLQKHGLLEGDIAAQSERVEALNAAALRFSQLQGYQPCDPQVICNRVNHVHGCLAELQEQAARRRAELEASRSLWALLQELEEAESWARDKERLLEAAGGGGAAGAAGAAGTAGGAHDLSSTARLLAQHKILQGELGGRRALLQQALRCGEELVAAGGAVGPGADTVHLVGLAERAASARRRWQRLEEAAARRERRLQEARALHQFGADLDGLLDWLRDAYRLAAAGDFGHDEASSRRLARQHRALTGEVEAHRGPVSGLRRQLATLGGASGAGPLVVALQVRVVEAEQLFAEVTEVAALRRQWLRDALAVYRMFGEVHACELWIGEKEQWLLSMRVPDSLDDVEVVQHRFESLDQEMNSLMGRVLDVNHTVQELVEGGHPSSDEVRSCQDHLNSRWNRIVELVEQRKEEMSAVLLVENHVLEVAEVRAQVREKRRAVESAPRAGGALQWRLSGLEAALQALEPRQAALLEEAALLAERFPAQAARLHQGAEELGAEWGALASAAQACGEAVAAAGRLQRFLHDLDAFLDWLVRAQEAAGGSEGPLPNSLEEADALLARHAALKEEVDQREEDYARIVAASEALLAADGAELGPGLALDEWLPHLELGWHKLLGLWEARREALVQAHIYQLFLRDLRQALVVLRNQEMALSGAELPGTVESVEEALKQHRDFLTTMELSQQKMQVAVQAAEGLLRQGNIYGEQAQEAVTRLLEKNQENQLRAQQWMQKLHDQLELQHFLRDCHELDGWIHEKMLMARDGTREDNHKLHKRWLRHQAFMAELAQNKEWLEKIEREGQQLMQEKPELAASVRKKLGEIRQCWAELESTTQAKARQLFEASKADQLVQSFAELDKKLLHMESQLQDVDPGGDLATVNSQLKKLQSMESQVEEWYREVGELQAQTAALPLEPASKELVGERQNAVGERLVRLLEPLQERRRLLLASKELHQVAHDLDDELAWVQERLPLAMQTERGNGLQAVQQHIKKNQGLRREIQAHGPRLEEVLERAGALASLRSPEAEAVRRGLEQLQSAWAGLREAAERRQQVLDAAFQVEQYYFDVAEVEAWLGEQELLMMSEDKGKDEQSTLQLLKKHLQLEQGVENYEESIAQLSRQCRALLEMGHPDSEQISRRQSQVDRLYVALKELGEERRVALEQQYWLYQLSRQVSELEHWIAEKEVVAGSPELGQDFEHVSVLQEKFSEFASETGMAGRERLAAVNQMVDELIECGHTAAATMAEWKDGLNEAWAELLELMGTRAQLLAASRELHKFFSDARELQGQIEEKRRRLPRLTTPPEPRPSASSMQRTLRAFEHDLQLLVSQVRQLQEGAAQLRTVYAGEHAEAIASREQEVLQGWKELLSACEDARLHVSSTADALRFHSQVRDLLSWMDGIASQIGAADKPRDVSSVEVLMNYHQGLKTELEARVPELTTCQELGRSLLLNKSAMADEIQAQLDKLGTRKEEVSEKWDRHWEWLQQMLEVHQFAQEAVVADAWLTAQEPLLQSRELGSSVDEVEQLIRRHEAFRKAAAAWEERFSSLRRLTTIEKIKAEQSKQPPTPLLGRKFFGDPTELAAKAAPLLRPGGYERGLEPLARRASDTLSAEVRTRVGYVRQELKPERLQPRIDRLPEIPGRVEPAALPAAPEDAAETPATPAAAEQVRPRPERQESADRAEELPRRRRPERQESVDQSEEAARRRRPERQESAEHEAAHSLTLGRYEQMERRRERRERRLERQESSEQEMPIRGDLVKGKATLADIVEQLQEKEAGPGLPAGPSLPQPRELPPGRLPNGLELPERTPRPDRPRARDRPKPRRRPRPREGGEGGGSRRSRSAPAQGGSAPAPPPPPTHTVQHEGFLLRKRELDANRKSSNRSWVSLYCVLSKGELGFYKDSKGPASGSTHGGEPLLSLHKATSEVASDYKKKKHVFKLQTQDGSEFLLQAKDEEEMNGWLEAVASSVAEHAEIARWGQTLPTTSSTDEGNPKREGGDRRASGRRK</sequence>
<dbReference type="EMBL" id="AF311855">
    <property type="protein sequence ID" value="AAG42473.1"/>
    <property type="molecule type" value="mRNA"/>
</dbReference>
<dbReference type="EMBL" id="AF311856">
    <property type="protein sequence ID" value="AAG42474.1"/>
    <property type="molecule type" value="mRNA"/>
</dbReference>
<dbReference type="EMBL" id="AF082075">
    <property type="protein sequence ID" value="AAG38874.1"/>
    <property type="molecule type" value="mRNA"/>
</dbReference>
<dbReference type="EMBL" id="AY004226">
    <property type="protein sequence ID" value="AAF93171.1"/>
    <property type="molecule type" value="mRNA"/>
</dbReference>
<dbReference type="EMBL" id="AY004226">
    <property type="protein sequence ID" value="AAF93172.1"/>
    <property type="molecule type" value="mRNA"/>
</dbReference>
<dbReference type="EMBL" id="AY004227">
    <property type="protein sequence ID" value="AAF93173.1"/>
    <property type="molecule type" value="mRNA"/>
</dbReference>
<dbReference type="EMBL" id="AC020929">
    <property type="status" value="NOT_ANNOTATED_CDS"/>
    <property type="molecule type" value="Genomic_DNA"/>
</dbReference>
<dbReference type="EMBL" id="AB046862">
    <property type="protein sequence ID" value="BAB13468.1"/>
    <property type="molecule type" value="mRNA"/>
</dbReference>
<dbReference type="CCDS" id="CCDS12559.1">
    <molecule id="Q9H254-1"/>
</dbReference>
<dbReference type="CCDS" id="CCDS42569.1">
    <molecule id="Q9H254-5"/>
</dbReference>
<dbReference type="RefSeq" id="NP_066022.2">
    <molecule id="Q9H254-1"/>
    <property type="nucleotide sequence ID" value="NM_020971.3"/>
</dbReference>
<dbReference type="RefSeq" id="NP_079489.2">
    <molecule id="Q9H254-5"/>
    <property type="nucleotide sequence ID" value="NM_025213.3"/>
</dbReference>
<dbReference type="RefSeq" id="XP_016882538.1">
    <molecule id="Q9H254-1"/>
    <property type="nucleotide sequence ID" value="XM_017027049.2"/>
</dbReference>
<dbReference type="RefSeq" id="XP_054177550.1">
    <molecule id="Q9H254-1"/>
    <property type="nucleotide sequence ID" value="XM_054321575.1"/>
</dbReference>
<dbReference type="SMR" id="Q9H254"/>
<dbReference type="BioGRID" id="121751">
    <property type="interactions" value="60"/>
</dbReference>
<dbReference type="FunCoup" id="Q9H254">
    <property type="interactions" value="202"/>
</dbReference>
<dbReference type="IntAct" id="Q9H254">
    <property type="interactions" value="29"/>
</dbReference>
<dbReference type="MINT" id="Q9H254"/>
<dbReference type="STRING" id="9606.ENSP00000469242"/>
<dbReference type="GlyCosmos" id="Q9H254">
    <property type="glycosylation" value="1 site, 1 glycan"/>
</dbReference>
<dbReference type="GlyGen" id="Q9H254">
    <property type="glycosylation" value="2 sites, 1 O-linked glycan (1 site)"/>
</dbReference>
<dbReference type="iPTMnet" id="Q9H254"/>
<dbReference type="PhosphoSitePlus" id="Q9H254"/>
<dbReference type="BioMuta" id="SPTBN4"/>
<dbReference type="DMDM" id="17368942"/>
<dbReference type="jPOST" id="Q9H254"/>
<dbReference type="MassIVE" id="Q9H254"/>
<dbReference type="PaxDb" id="9606-ENSP00000263373"/>
<dbReference type="PeptideAtlas" id="Q9H254"/>
<dbReference type="ProteomicsDB" id="20368"/>
<dbReference type="ProteomicsDB" id="80498">
    <molecule id="Q9H254-1"/>
</dbReference>
<dbReference type="ProteomicsDB" id="80499">
    <molecule id="Q9H254-2"/>
</dbReference>
<dbReference type="ProteomicsDB" id="80500">
    <molecule id="Q9H254-3"/>
</dbReference>
<dbReference type="ProteomicsDB" id="80501">
    <molecule id="Q9H254-4"/>
</dbReference>
<dbReference type="ABCD" id="Q9H254">
    <property type="antibodies" value="2 sequenced antibodies"/>
</dbReference>
<dbReference type="Antibodypedia" id="48036">
    <property type="antibodies" value="162 antibodies from 22 providers"/>
</dbReference>
<dbReference type="DNASU" id="57731"/>
<dbReference type="Ensembl" id="ENST00000352632.7">
    <molecule id="Q9H254-1"/>
    <property type="protein sequence ID" value="ENSP00000263373.2"/>
    <property type="gene ID" value="ENSG00000160460.17"/>
</dbReference>
<dbReference type="Ensembl" id="ENST00000392023.1">
    <molecule id="Q9H254-5"/>
    <property type="protein sequence ID" value="ENSP00000375877.1"/>
    <property type="gene ID" value="ENSG00000160460.17"/>
</dbReference>
<dbReference type="Ensembl" id="ENST00000598249.6">
    <molecule id="Q9H254-1"/>
    <property type="protein sequence ID" value="ENSP00000469242.1"/>
    <property type="gene ID" value="ENSG00000160460.17"/>
</dbReference>
<dbReference type="GeneID" id="57731"/>
<dbReference type="KEGG" id="hsa:57731"/>
<dbReference type="MANE-Select" id="ENST00000598249.6">
    <property type="protein sequence ID" value="ENSP00000469242.1"/>
    <property type="RefSeq nucleotide sequence ID" value="NM_020971.3"/>
    <property type="RefSeq protein sequence ID" value="NP_066022.2"/>
</dbReference>
<dbReference type="UCSC" id="uc002ony.4">
    <molecule id="Q9H254-1"/>
    <property type="organism name" value="human"/>
</dbReference>
<dbReference type="AGR" id="HGNC:14896"/>
<dbReference type="CTD" id="57731"/>
<dbReference type="DisGeNET" id="57731"/>
<dbReference type="GeneCards" id="SPTBN4"/>
<dbReference type="GeneReviews" id="SPTBN4"/>
<dbReference type="HGNC" id="HGNC:14896">
    <property type="gene designation" value="SPTBN4"/>
</dbReference>
<dbReference type="HPA" id="ENSG00000160460">
    <property type="expression patterns" value="Group enriched (brain, pituitary gland)"/>
</dbReference>
<dbReference type="MalaCards" id="SPTBN4"/>
<dbReference type="MIM" id="606214">
    <property type="type" value="gene"/>
</dbReference>
<dbReference type="MIM" id="617519">
    <property type="type" value="phenotype"/>
</dbReference>
<dbReference type="neXtProt" id="NX_Q9H254"/>
<dbReference type="OpenTargets" id="ENSG00000160460"/>
<dbReference type="PharmGKB" id="PA37918"/>
<dbReference type="VEuPathDB" id="HostDB:ENSG00000160460"/>
<dbReference type="eggNOG" id="KOG0517">
    <property type="taxonomic scope" value="Eukaryota"/>
</dbReference>
<dbReference type="GeneTree" id="ENSGT00940000156343"/>
<dbReference type="HOGENOM" id="CLU_000146_0_1_1"/>
<dbReference type="InParanoid" id="Q9H254"/>
<dbReference type="OMA" id="LTSCEDC"/>
<dbReference type="OrthoDB" id="5865767at2759"/>
<dbReference type="PAN-GO" id="Q9H254">
    <property type="GO annotations" value="8 GO annotations based on evolutionary models"/>
</dbReference>
<dbReference type="PhylomeDB" id="Q9H254"/>
<dbReference type="TreeFam" id="TF313446"/>
<dbReference type="PathwayCommons" id="Q9H254"/>
<dbReference type="Reactome" id="R-HSA-375165">
    <property type="pathway name" value="NCAM signaling for neurite out-growth"/>
</dbReference>
<dbReference type="Reactome" id="R-HSA-445095">
    <property type="pathway name" value="Interaction between L1 and Ankyrins"/>
</dbReference>
<dbReference type="Reactome" id="R-HSA-5673001">
    <property type="pathway name" value="RAF/MAP kinase cascade"/>
</dbReference>
<dbReference type="Reactome" id="R-HSA-6807878">
    <property type="pathway name" value="COPI-mediated anterograde transport"/>
</dbReference>
<dbReference type="SignaLink" id="Q9H254"/>
<dbReference type="BioGRID-ORCS" id="57731">
    <property type="hits" value="15 hits in 1148 CRISPR screens"/>
</dbReference>
<dbReference type="CD-CODE" id="FB4E32DD">
    <property type="entry name" value="Presynaptic clusters and postsynaptic densities"/>
</dbReference>
<dbReference type="ChiTaRS" id="SPTBN4">
    <property type="organism name" value="human"/>
</dbReference>
<dbReference type="GeneWiki" id="SPTBN4"/>
<dbReference type="GenomeRNAi" id="57731"/>
<dbReference type="Pharos" id="Q9H254">
    <property type="development level" value="Tbio"/>
</dbReference>
<dbReference type="PRO" id="PR:Q9H254"/>
<dbReference type="Proteomes" id="UP000005640">
    <property type="component" value="Chromosome 19"/>
</dbReference>
<dbReference type="RNAct" id="Q9H254">
    <property type="molecule type" value="protein"/>
</dbReference>
<dbReference type="Bgee" id="ENSG00000160460">
    <property type="expression patterns" value="Expressed in right hemisphere of cerebellum and 152 other cell types or tissues"/>
</dbReference>
<dbReference type="ExpressionAtlas" id="Q9H254">
    <property type="expression patterns" value="baseline and differential"/>
</dbReference>
<dbReference type="GO" id="GO:0005884">
    <property type="term" value="C:actin filament"/>
    <property type="evidence" value="ECO:0000250"/>
    <property type="project" value="ARUK-UCL"/>
</dbReference>
<dbReference type="GO" id="GO:0043203">
    <property type="term" value="C:axon hillock"/>
    <property type="evidence" value="ECO:0000250"/>
    <property type="project" value="BHF-UCL"/>
</dbReference>
<dbReference type="GO" id="GO:0043194">
    <property type="term" value="C:axon initial segment"/>
    <property type="evidence" value="ECO:0000250"/>
    <property type="project" value="ARUK-UCL"/>
</dbReference>
<dbReference type="GO" id="GO:0070852">
    <property type="term" value="C:cell body fiber"/>
    <property type="evidence" value="ECO:0000250"/>
    <property type="project" value="BHF-UCL"/>
</dbReference>
<dbReference type="GO" id="GO:0030054">
    <property type="term" value="C:cell junction"/>
    <property type="evidence" value="ECO:0000318"/>
    <property type="project" value="GO_Central"/>
</dbReference>
<dbReference type="GO" id="GO:0042995">
    <property type="term" value="C:cell projection"/>
    <property type="evidence" value="ECO:0000318"/>
    <property type="project" value="GO_Central"/>
</dbReference>
<dbReference type="GO" id="GO:0030864">
    <property type="term" value="C:cortical actin cytoskeleton"/>
    <property type="evidence" value="ECO:0000318"/>
    <property type="project" value="GO_Central"/>
</dbReference>
<dbReference type="GO" id="GO:0005737">
    <property type="term" value="C:cytoplasm"/>
    <property type="evidence" value="ECO:0000314"/>
    <property type="project" value="UniProtKB"/>
</dbReference>
<dbReference type="GO" id="GO:0005829">
    <property type="term" value="C:cytosol"/>
    <property type="evidence" value="ECO:0000304"/>
    <property type="project" value="Reactome"/>
</dbReference>
<dbReference type="GO" id="GO:0070062">
    <property type="term" value="C:extracellular exosome"/>
    <property type="evidence" value="ECO:0007005"/>
    <property type="project" value="UniProtKB"/>
</dbReference>
<dbReference type="GO" id="GO:0014704">
    <property type="term" value="C:intercalated disc"/>
    <property type="evidence" value="ECO:0007669"/>
    <property type="project" value="Ensembl"/>
</dbReference>
<dbReference type="GO" id="GO:0044224">
    <property type="term" value="C:juxtaparanode region of axon"/>
    <property type="evidence" value="ECO:0007669"/>
    <property type="project" value="Ensembl"/>
</dbReference>
<dbReference type="GO" id="GO:0016020">
    <property type="term" value="C:membrane"/>
    <property type="evidence" value="ECO:0000314"/>
    <property type="project" value="BHF-UCL"/>
</dbReference>
<dbReference type="GO" id="GO:0043025">
    <property type="term" value="C:neuronal cell body"/>
    <property type="evidence" value="ECO:0000250"/>
    <property type="project" value="BHF-UCL"/>
</dbReference>
<dbReference type="GO" id="GO:0033268">
    <property type="term" value="C:node of Ranvier"/>
    <property type="evidence" value="ECO:0000250"/>
    <property type="project" value="BHF-UCL"/>
</dbReference>
<dbReference type="GO" id="GO:0016363">
    <property type="term" value="C:nuclear matrix"/>
    <property type="evidence" value="ECO:0000314"/>
    <property type="project" value="UniProtKB"/>
</dbReference>
<dbReference type="GO" id="GO:0033270">
    <property type="term" value="C:paranode region of axon"/>
    <property type="evidence" value="ECO:0007669"/>
    <property type="project" value="Ensembl"/>
</dbReference>
<dbReference type="GO" id="GO:0005886">
    <property type="term" value="C:plasma membrane"/>
    <property type="evidence" value="ECO:0000250"/>
    <property type="project" value="BHF-UCL"/>
</dbReference>
<dbReference type="GO" id="GO:0016605">
    <property type="term" value="C:PML body"/>
    <property type="evidence" value="ECO:0000314"/>
    <property type="project" value="UniProtKB"/>
</dbReference>
<dbReference type="GO" id="GO:0008091">
    <property type="term" value="C:spectrin"/>
    <property type="evidence" value="ECO:0000314"/>
    <property type="project" value="UniProtKB"/>
</dbReference>
<dbReference type="GO" id="GO:0003779">
    <property type="term" value="F:actin binding"/>
    <property type="evidence" value="ECO:0000250"/>
    <property type="project" value="BHF-UCL"/>
</dbReference>
<dbReference type="GO" id="GO:0051015">
    <property type="term" value="F:actin filament binding"/>
    <property type="evidence" value="ECO:0000318"/>
    <property type="project" value="GO_Central"/>
</dbReference>
<dbReference type="GO" id="GO:0030506">
    <property type="term" value="F:ankyrin binding"/>
    <property type="evidence" value="ECO:0000314"/>
    <property type="project" value="UniProtKB"/>
</dbReference>
<dbReference type="GO" id="GO:0106006">
    <property type="term" value="F:cytoskeletal protein-membrane anchor activity"/>
    <property type="evidence" value="ECO:0000304"/>
    <property type="project" value="UniProtKB"/>
</dbReference>
<dbReference type="GO" id="GO:0019902">
    <property type="term" value="F:phosphatase binding"/>
    <property type="evidence" value="ECO:0000353"/>
    <property type="project" value="BHF-UCL"/>
</dbReference>
<dbReference type="GO" id="GO:0005543">
    <property type="term" value="F:phospholipid binding"/>
    <property type="evidence" value="ECO:0007669"/>
    <property type="project" value="InterPro"/>
</dbReference>
<dbReference type="GO" id="GO:0030507">
    <property type="term" value="F:spectrin binding"/>
    <property type="evidence" value="ECO:0000250"/>
    <property type="project" value="BHF-UCL"/>
</dbReference>
<dbReference type="GO" id="GO:0005200">
    <property type="term" value="F:structural constituent of cytoskeleton"/>
    <property type="evidence" value="ECO:0000304"/>
    <property type="project" value="UniProtKB"/>
</dbReference>
<dbReference type="GO" id="GO:0030036">
    <property type="term" value="P:actin cytoskeleton organization"/>
    <property type="evidence" value="ECO:0000318"/>
    <property type="project" value="GO_Central"/>
</dbReference>
<dbReference type="GO" id="GO:0051693">
    <property type="term" value="P:actin filament capping"/>
    <property type="evidence" value="ECO:0007669"/>
    <property type="project" value="UniProtKB-KW"/>
</dbReference>
<dbReference type="GO" id="GO:0007628">
    <property type="term" value="P:adult walking behavior"/>
    <property type="evidence" value="ECO:0000250"/>
    <property type="project" value="BHF-UCL"/>
</dbReference>
<dbReference type="GO" id="GO:0007409">
    <property type="term" value="P:axonogenesis"/>
    <property type="evidence" value="ECO:0000250"/>
    <property type="project" value="BHF-UCL"/>
</dbReference>
<dbReference type="GO" id="GO:0061337">
    <property type="term" value="P:cardiac conduction"/>
    <property type="evidence" value="ECO:0000250"/>
    <property type="project" value="BHF-UCL"/>
</dbReference>
<dbReference type="GO" id="GO:0021952">
    <property type="term" value="P:central nervous system projection neuron axonogenesis"/>
    <property type="evidence" value="ECO:0000250"/>
    <property type="project" value="BHF-UCL"/>
</dbReference>
<dbReference type="GO" id="GO:0045162">
    <property type="term" value="P:clustering of voltage-gated sodium channels"/>
    <property type="evidence" value="ECO:0000250"/>
    <property type="project" value="BHF-UCL"/>
</dbReference>
<dbReference type="GO" id="GO:0009566">
    <property type="term" value="P:fertilization"/>
    <property type="evidence" value="ECO:0007669"/>
    <property type="project" value="Ensembl"/>
</dbReference>
<dbReference type="GO" id="GO:0010459">
    <property type="term" value="P:negative regulation of heart rate"/>
    <property type="evidence" value="ECO:0000250"/>
    <property type="project" value="BHF-UCL"/>
</dbReference>
<dbReference type="GO" id="GO:0007528">
    <property type="term" value="P:neuromuscular junction development"/>
    <property type="evidence" value="ECO:0007669"/>
    <property type="project" value="Ensembl"/>
</dbReference>
<dbReference type="GO" id="GO:0050905">
    <property type="term" value="P:neuromuscular process"/>
    <property type="evidence" value="ECO:0007669"/>
    <property type="project" value="Ensembl"/>
</dbReference>
<dbReference type="GO" id="GO:0040018">
    <property type="term" value="P:positive regulation of multicellular organism growth"/>
    <property type="evidence" value="ECO:0007669"/>
    <property type="project" value="Ensembl"/>
</dbReference>
<dbReference type="GO" id="GO:0072659">
    <property type="term" value="P:protein localization to plasma membrane"/>
    <property type="evidence" value="ECO:0000250"/>
    <property type="project" value="BHF-UCL"/>
</dbReference>
<dbReference type="GO" id="GO:0065003">
    <property type="term" value="P:protein-containing complex assembly"/>
    <property type="evidence" value="ECO:0007669"/>
    <property type="project" value="Ensembl"/>
</dbReference>
<dbReference type="GO" id="GO:0002028">
    <property type="term" value="P:regulation of sodium ion transport"/>
    <property type="evidence" value="ECO:0000250"/>
    <property type="project" value="BHF-UCL"/>
</dbReference>
<dbReference type="GO" id="GO:0007605">
    <property type="term" value="P:sensory perception of sound"/>
    <property type="evidence" value="ECO:0000250"/>
    <property type="project" value="BHF-UCL"/>
</dbReference>
<dbReference type="GO" id="GO:0019226">
    <property type="term" value="P:transmission of nerve impulse"/>
    <property type="evidence" value="ECO:0000250"/>
    <property type="project" value="BHF-UCL"/>
</dbReference>
<dbReference type="GO" id="GO:0016192">
    <property type="term" value="P:vesicle-mediated transport"/>
    <property type="evidence" value="ECO:0000304"/>
    <property type="project" value="UniProtKB"/>
</dbReference>
<dbReference type="CDD" id="cd21322">
    <property type="entry name" value="CH_SPTBN4_rpt2"/>
    <property type="match status" value="1"/>
</dbReference>
<dbReference type="CDD" id="cd10571">
    <property type="entry name" value="PH_beta_spectrin"/>
    <property type="match status" value="1"/>
</dbReference>
<dbReference type="CDD" id="cd00176">
    <property type="entry name" value="SPEC"/>
    <property type="match status" value="7"/>
</dbReference>
<dbReference type="FunFam" id="1.10.418.10:FF:000003">
    <property type="entry name" value="Spectrin beta chain"/>
    <property type="match status" value="1"/>
</dbReference>
<dbReference type="FunFam" id="1.10.418.10:FF:000004">
    <property type="entry name" value="Spectrin beta chain"/>
    <property type="match status" value="1"/>
</dbReference>
<dbReference type="FunFam" id="1.20.58.60:FF:000011">
    <property type="entry name" value="Spectrin beta chain"/>
    <property type="match status" value="1"/>
</dbReference>
<dbReference type="FunFam" id="1.20.58.60:FF:000018">
    <property type="entry name" value="Spectrin beta chain"/>
    <property type="match status" value="1"/>
</dbReference>
<dbReference type="FunFam" id="1.20.58.60:FF:000019">
    <property type="entry name" value="Spectrin beta chain"/>
    <property type="match status" value="1"/>
</dbReference>
<dbReference type="FunFam" id="1.20.58.60:FF:000033">
    <property type="entry name" value="Spectrin beta chain"/>
    <property type="match status" value="1"/>
</dbReference>
<dbReference type="FunFam" id="1.20.58.60:FF:000083">
    <property type="entry name" value="Spectrin beta chain"/>
    <property type="match status" value="1"/>
</dbReference>
<dbReference type="FunFam" id="1.20.58.60:FF:000176">
    <property type="entry name" value="Spectrin beta chain"/>
    <property type="match status" value="1"/>
</dbReference>
<dbReference type="FunFam" id="1.20.58.60:FF:000210">
    <property type="entry name" value="Spectrin beta chain"/>
    <property type="match status" value="1"/>
</dbReference>
<dbReference type="FunFam" id="1.20.58.60:FF:000244">
    <property type="entry name" value="Spectrin beta chain"/>
    <property type="match status" value="1"/>
</dbReference>
<dbReference type="FunFam" id="1.20.58.60:FF:000256">
    <property type="entry name" value="Spectrin beta chain"/>
    <property type="match status" value="1"/>
</dbReference>
<dbReference type="FunFam" id="1.20.58.60:FF:000294">
    <property type="entry name" value="Spectrin beta chain"/>
    <property type="match status" value="1"/>
</dbReference>
<dbReference type="FunFam" id="1.20.58.60:FF:000305">
    <property type="entry name" value="Spectrin beta chain"/>
    <property type="match status" value="1"/>
</dbReference>
<dbReference type="FunFam" id="2.30.29.30:FF:000024">
    <property type="entry name" value="Spectrin beta chain"/>
    <property type="match status" value="1"/>
</dbReference>
<dbReference type="Gene3D" id="1.20.58.60">
    <property type="match status" value="11"/>
</dbReference>
<dbReference type="Gene3D" id="1.10.418.10">
    <property type="entry name" value="Calponin-like domain"/>
    <property type="match status" value="2"/>
</dbReference>
<dbReference type="Gene3D" id="2.30.29.30">
    <property type="entry name" value="Pleckstrin-homology domain (PH domain)/Phosphotyrosine-binding domain (PTB)"/>
    <property type="match status" value="1"/>
</dbReference>
<dbReference type="InterPro" id="IPR001589">
    <property type="entry name" value="Actinin_actin-bd_CS"/>
</dbReference>
<dbReference type="InterPro" id="IPR001715">
    <property type="entry name" value="CH_dom"/>
</dbReference>
<dbReference type="InterPro" id="IPR036872">
    <property type="entry name" value="CH_dom_sf"/>
</dbReference>
<dbReference type="InterPro" id="IPR011993">
    <property type="entry name" value="PH-like_dom_sf"/>
</dbReference>
<dbReference type="InterPro" id="IPR041681">
    <property type="entry name" value="PH_9"/>
</dbReference>
<dbReference type="InterPro" id="IPR001605">
    <property type="entry name" value="PH_dom-spectrin-type"/>
</dbReference>
<dbReference type="InterPro" id="IPR001849">
    <property type="entry name" value="PH_domain"/>
</dbReference>
<dbReference type="InterPro" id="IPR018159">
    <property type="entry name" value="Spectrin/alpha-actinin"/>
</dbReference>
<dbReference type="InterPro" id="IPR016343">
    <property type="entry name" value="Spectrin_bsu"/>
</dbReference>
<dbReference type="InterPro" id="IPR002017">
    <property type="entry name" value="Spectrin_repeat"/>
</dbReference>
<dbReference type="PANTHER" id="PTHR11915">
    <property type="entry name" value="SPECTRIN/FILAMIN RELATED CYTOSKELETAL PROTEIN"/>
    <property type="match status" value="1"/>
</dbReference>
<dbReference type="Pfam" id="PF00307">
    <property type="entry name" value="CH"/>
    <property type="match status" value="2"/>
</dbReference>
<dbReference type="Pfam" id="PF15410">
    <property type="entry name" value="PH_9"/>
    <property type="match status" value="1"/>
</dbReference>
<dbReference type="Pfam" id="PF00435">
    <property type="entry name" value="Spectrin"/>
    <property type="match status" value="14"/>
</dbReference>
<dbReference type="PIRSF" id="PIRSF002297">
    <property type="entry name" value="Spectrin_beta_subunit"/>
    <property type="match status" value="1"/>
</dbReference>
<dbReference type="PRINTS" id="PR00683">
    <property type="entry name" value="SPECTRINPH"/>
</dbReference>
<dbReference type="SMART" id="SM00033">
    <property type="entry name" value="CH"/>
    <property type="match status" value="2"/>
</dbReference>
<dbReference type="SMART" id="SM00233">
    <property type="entry name" value="PH"/>
    <property type="match status" value="1"/>
</dbReference>
<dbReference type="SMART" id="SM00150">
    <property type="entry name" value="SPEC"/>
    <property type="match status" value="16"/>
</dbReference>
<dbReference type="SUPFAM" id="SSF47576">
    <property type="entry name" value="Calponin-homology domain, CH-domain"/>
    <property type="match status" value="1"/>
</dbReference>
<dbReference type="SUPFAM" id="SSF50729">
    <property type="entry name" value="PH domain-like"/>
    <property type="match status" value="1"/>
</dbReference>
<dbReference type="SUPFAM" id="SSF46966">
    <property type="entry name" value="Spectrin repeat"/>
    <property type="match status" value="13"/>
</dbReference>
<dbReference type="PROSITE" id="PS00019">
    <property type="entry name" value="ACTININ_1"/>
    <property type="match status" value="1"/>
</dbReference>
<dbReference type="PROSITE" id="PS00020">
    <property type="entry name" value="ACTININ_2"/>
    <property type="match status" value="1"/>
</dbReference>
<dbReference type="PROSITE" id="PS50021">
    <property type="entry name" value="CH"/>
    <property type="match status" value="2"/>
</dbReference>
<dbReference type="PROSITE" id="PS50003">
    <property type="entry name" value="PH_DOMAIN"/>
    <property type="match status" value="1"/>
</dbReference>
<gene>
    <name type="primary">SPTBN4</name>
    <name type="synonym">KIAA1642</name>
    <name type="synonym">SPTBN3</name>
</gene>
<comment type="interaction">
    <interactant intactId="EBI-308543">
        <id>Q9H254</id>
    </interactant>
    <interactant intactId="EBI-529989">
        <id>Q9NRI5</id>
        <label>DISC1</label>
    </interactant>
    <organismsDiffer>false</organismsDiffer>
    <experiments>3</experiments>
</comment>
<comment type="interaction">
    <interactant intactId="EBI-308543">
        <id>Q9H254</id>
    </interactant>
    <interactant intactId="EBI-728153">
        <id>Q16849</id>
        <label>PTPRN</label>
    </interactant>
    <organismsDiffer>false</organismsDiffer>
    <experiments>2</experiments>
</comment>
<comment type="subcellular location">
    <subcellularLocation>
        <location evidence="1">Cytoplasm</location>
        <location evidence="1">Cytoskeleton</location>
    </subcellularLocation>
    <subcellularLocation>
        <location evidence="1">Cytoplasm</location>
        <location evidence="1">Cell cortex</location>
    </subcellularLocation>
</comment>
<comment type="alternative products">
    <event type="alternative splicing"/>
    <isoform>
        <id>Q9H254-1</id>
        <name>1</name>
        <sequence type="displayed"/>
    </isoform>
    <isoform>
        <id>Q9H254-2</id>
        <name>2</name>
        <sequence type="described" ref="VSP_000725 VSP_000726"/>
    </isoform>
    <isoform>
        <id>Q9H254-3</id>
        <name>3</name>
        <sequence type="described" ref="VSP_000723 VSP_000724"/>
    </isoform>
    <isoform>
        <id>Q9H254-4</id>
        <name>4</name>
        <sequence type="described" ref="VSP_000727 VSP_000728"/>
    </isoform>
    <isoform>
        <id>Q9H254-5</id>
        <name>5</name>
        <sequence type="described" ref="VSP_046383 VSP_046384 VSP_046385"/>
    </isoform>
</comment>
<comment type="tissue specificity">
    <text evidence="6 8">Expressed in skeletal muscle at the sarcolemma and in the muscle capillaries (at protein level) (PubMed:28540413). Abundantly expressed in brain and pancreatic islets (PubMed:11086001).</text>
</comment>
<comment type="disease" evidence="8">
    <disease id="DI-05015">
        <name>Neurodevelopmental disorder with hypotonia, neuropathy, and deafness</name>
        <acronym>NEDHND</acronym>
        <description>An autosomal recessive disorder characterized by congenital myopathy with hypotonia and muscle weakness manifesting after birth and progressing to generalized muscle atrophy, central deafness with absent brainstem-evoked potentials, and a combined axonal and demyelinating motor neuropathy.</description>
        <dbReference type="MIM" id="617519"/>
    </disease>
    <text>The disease is caused by variants affecting the gene represented in this entry.</text>
</comment>
<comment type="similarity">
    <text evidence="11">Belongs to the spectrin family.</text>
</comment>
<proteinExistence type="evidence at protein level"/>
<reference key="1">
    <citation type="journal article" date="2001" name="J. Biol. Chem.">
        <title>A new spectrin, beta-IV, has a major truncated isoform that associates with promyelocytic leukemia protein nuclear bodies and the nuclear matrix.</title>
        <authorList>
            <person name="Tse W.T."/>
            <person name="Tang J."/>
            <person name="Jin O."/>
            <person name="Korsgren C."/>
            <person name="John K.M."/>
            <person name="Kung A.L."/>
            <person name="Gwynn B."/>
            <person name="Peters L.L."/>
            <person name="Lux S.E."/>
        </authorList>
    </citation>
    <scope>NUCLEOTIDE SEQUENCE [MRNA] (ISOFORMS 1 AND 5)</scope>
    <scope>VARIANT SER-1331</scope>
</reference>
<reference key="2">
    <citation type="journal article" date="2000" name="J. Cell Biol.">
        <title>BetaIV spectrin, a new spectrin localized at axon initial segments and nodes of Ranvier in the central and peripheral nervous system.</title>
        <authorList>
            <person name="Berghs S."/>
            <person name="Aggujaro D."/>
            <person name="Dirkx R. Jr."/>
            <person name="Maksimova E."/>
            <person name="Stabach P."/>
            <person name="Hermel J.-M."/>
            <person name="Zhang J.-P."/>
            <person name="Philbrick W."/>
            <person name="Slepnev V."/>
            <person name="Ort T."/>
            <person name="Solimena M."/>
        </authorList>
    </citation>
    <scope>NUCLEOTIDE SEQUENCE [MRNA] (ISOFORMS 1; 2; 3 AND 4)</scope>
</reference>
<reference key="3">
    <citation type="journal article" date="2004" name="Nature">
        <title>The DNA sequence and biology of human chromosome 19.</title>
        <authorList>
            <person name="Grimwood J."/>
            <person name="Gordon L.A."/>
            <person name="Olsen A.S."/>
            <person name="Terry A."/>
            <person name="Schmutz J."/>
            <person name="Lamerdin J.E."/>
            <person name="Hellsten U."/>
            <person name="Goodstein D."/>
            <person name="Couronne O."/>
            <person name="Tran-Gyamfi M."/>
            <person name="Aerts A."/>
            <person name="Altherr M."/>
            <person name="Ashworth L."/>
            <person name="Bajorek E."/>
            <person name="Black S."/>
            <person name="Branscomb E."/>
            <person name="Caenepeel S."/>
            <person name="Carrano A.V."/>
            <person name="Caoile C."/>
            <person name="Chan Y.M."/>
            <person name="Christensen M."/>
            <person name="Cleland C.A."/>
            <person name="Copeland A."/>
            <person name="Dalin E."/>
            <person name="Dehal P."/>
            <person name="Denys M."/>
            <person name="Detter J.C."/>
            <person name="Escobar J."/>
            <person name="Flowers D."/>
            <person name="Fotopulos D."/>
            <person name="Garcia C."/>
            <person name="Georgescu A.M."/>
            <person name="Glavina T."/>
            <person name="Gomez M."/>
            <person name="Gonzales E."/>
            <person name="Groza M."/>
            <person name="Hammon N."/>
            <person name="Hawkins T."/>
            <person name="Haydu L."/>
            <person name="Ho I."/>
            <person name="Huang W."/>
            <person name="Israni S."/>
            <person name="Jett J."/>
            <person name="Kadner K."/>
            <person name="Kimball H."/>
            <person name="Kobayashi A."/>
            <person name="Larionov V."/>
            <person name="Leem S.-H."/>
            <person name="Lopez F."/>
            <person name="Lou Y."/>
            <person name="Lowry S."/>
            <person name="Malfatti S."/>
            <person name="Martinez D."/>
            <person name="McCready P.M."/>
            <person name="Medina C."/>
            <person name="Morgan J."/>
            <person name="Nelson K."/>
            <person name="Nolan M."/>
            <person name="Ovcharenko I."/>
            <person name="Pitluck S."/>
            <person name="Pollard M."/>
            <person name="Popkie A.P."/>
            <person name="Predki P."/>
            <person name="Quan G."/>
            <person name="Ramirez L."/>
            <person name="Rash S."/>
            <person name="Retterer J."/>
            <person name="Rodriguez A."/>
            <person name="Rogers S."/>
            <person name="Salamov A."/>
            <person name="Salazar A."/>
            <person name="She X."/>
            <person name="Smith D."/>
            <person name="Slezak T."/>
            <person name="Solovyev V."/>
            <person name="Thayer N."/>
            <person name="Tice H."/>
            <person name="Tsai M."/>
            <person name="Ustaszewska A."/>
            <person name="Vo N."/>
            <person name="Wagner M."/>
            <person name="Wheeler J."/>
            <person name="Wu K."/>
            <person name="Xie G."/>
            <person name="Yang J."/>
            <person name="Dubchak I."/>
            <person name="Furey T.S."/>
            <person name="DeJong P."/>
            <person name="Dickson M."/>
            <person name="Gordon D."/>
            <person name="Eichler E.E."/>
            <person name="Pennacchio L.A."/>
            <person name="Richardson P."/>
            <person name="Stubbs L."/>
            <person name="Rokhsar D.S."/>
            <person name="Myers R.M."/>
            <person name="Rubin E.M."/>
            <person name="Lucas S.M."/>
        </authorList>
    </citation>
    <scope>NUCLEOTIDE SEQUENCE [LARGE SCALE GENOMIC DNA]</scope>
</reference>
<reference key="4">
    <citation type="journal article" date="2000" name="DNA Res.">
        <title>Prediction of the coding sequences of unidentified human genes. XVIII. The complete sequences of 100 new cDNA clones from brain which code for large proteins in vitro.</title>
        <authorList>
            <person name="Nagase T."/>
            <person name="Kikuno R."/>
            <person name="Nakayama M."/>
            <person name="Hirosawa M."/>
            <person name="Ohara O."/>
        </authorList>
    </citation>
    <scope>NUCLEOTIDE SEQUENCE [LARGE SCALE MRNA] OF 386-2382 (ISOFORM 1)</scope>
    <source>
        <tissue>Brain</tissue>
    </source>
</reference>
<reference key="5">
    <citation type="journal article" date="2017" name="Hum. Genet.">
        <title>A recessive mutation in beta-IV-spectrin (SPTBN4) associates with congenital myopathy, neuropathy, and central deafness.</title>
        <authorList>
            <person name="Knierim E."/>
            <person name="Gill E."/>
            <person name="Seifert F."/>
            <person name="Morales-Gonzalez S."/>
            <person name="Unudurthi S.D."/>
            <person name="Hund T.J."/>
            <person name="Stenzel W."/>
            <person name="Schuelke M."/>
        </authorList>
    </citation>
    <scope>INVOLVEMENT IN NEDHND</scope>
    <scope>TISSUE SPECIFICITY</scope>
    <scope>VARIANT NEDHND 533-GLN--LYS-2564 DEL</scope>
</reference>
<protein>
    <recommendedName>
        <fullName>Spectrin beta chain, non-erythrocytic 4</fullName>
    </recommendedName>
    <alternativeName>
        <fullName>Beta-IV spectrin</fullName>
    </alternativeName>
    <alternativeName>
        <fullName>Spectrin, non-erythroid beta chain 3</fullName>
    </alternativeName>
</protein>
<evidence type="ECO:0000250" key="1"/>
<evidence type="ECO:0000255" key="2"/>
<evidence type="ECO:0000255" key="3">
    <source>
        <dbReference type="PROSITE-ProRule" id="PRU00044"/>
    </source>
</evidence>
<evidence type="ECO:0000255" key="4">
    <source>
        <dbReference type="PROSITE-ProRule" id="PRU00145"/>
    </source>
</evidence>
<evidence type="ECO:0000256" key="5">
    <source>
        <dbReference type="SAM" id="MobiDB-lite"/>
    </source>
</evidence>
<evidence type="ECO:0000269" key="6">
    <source>
    </source>
</evidence>
<evidence type="ECO:0000269" key="7">
    <source>
    </source>
</evidence>
<evidence type="ECO:0000269" key="8">
    <source>
    </source>
</evidence>
<evidence type="ECO:0000303" key="9">
    <source>
    </source>
</evidence>
<evidence type="ECO:0000303" key="10">
    <source>
    </source>
</evidence>
<evidence type="ECO:0000305" key="11"/>